<proteinExistence type="inferred from homology"/>
<protein>
    <recommendedName>
        <fullName evidence="1">Probable alpha-L-glutamate ligase</fullName>
        <ecNumber evidence="1">6.3.2.-</ecNumber>
    </recommendedName>
</protein>
<dbReference type="EC" id="6.3.2.-" evidence="1"/>
<dbReference type="EMBL" id="CP000749">
    <property type="protein sequence ID" value="ABR70290.1"/>
    <property type="molecule type" value="Genomic_DNA"/>
</dbReference>
<dbReference type="SMR" id="A6VV11"/>
<dbReference type="STRING" id="400668.Mmwyl1_1361"/>
<dbReference type="KEGG" id="mmw:Mmwyl1_1361"/>
<dbReference type="eggNOG" id="COG0189">
    <property type="taxonomic scope" value="Bacteria"/>
</dbReference>
<dbReference type="HOGENOM" id="CLU_054353_0_1_6"/>
<dbReference type="OrthoDB" id="3865600at2"/>
<dbReference type="GO" id="GO:0005737">
    <property type="term" value="C:cytoplasm"/>
    <property type="evidence" value="ECO:0007669"/>
    <property type="project" value="TreeGrafter"/>
</dbReference>
<dbReference type="GO" id="GO:0005524">
    <property type="term" value="F:ATP binding"/>
    <property type="evidence" value="ECO:0007669"/>
    <property type="project" value="UniProtKB-UniRule"/>
</dbReference>
<dbReference type="GO" id="GO:0046872">
    <property type="term" value="F:metal ion binding"/>
    <property type="evidence" value="ECO:0007669"/>
    <property type="project" value="UniProtKB-KW"/>
</dbReference>
<dbReference type="GO" id="GO:0018169">
    <property type="term" value="F:ribosomal S6-glutamic acid ligase activity"/>
    <property type="evidence" value="ECO:0007669"/>
    <property type="project" value="TreeGrafter"/>
</dbReference>
<dbReference type="GO" id="GO:0036211">
    <property type="term" value="P:protein modification process"/>
    <property type="evidence" value="ECO:0007669"/>
    <property type="project" value="InterPro"/>
</dbReference>
<dbReference type="GO" id="GO:0009432">
    <property type="term" value="P:SOS response"/>
    <property type="evidence" value="ECO:0007669"/>
    <property type="project" value="TreeGrafter"/>
</dbReference>
<dbReference type="GO" id="GO:0006412">
    <property type="term" value="P:translation"/>
    <property type="evidence" value="ECO:0007669"/>
    <property type="project" value="UniProtKB-KW"/>
</dbReference>
<dbReference type="FunFam" id="3.40.50.20:FF:000004">
    <property type="entry name" value="Probable alpha-L-glutamate ligase"/>
    <property type="match status" value="1"/>
</dbReference>
<dbReference type="FunFam" id="3.30.1490.20:FF:000005">
    <property type="entry name" value="Probable alpha-L-glutamate ligase 1"/>
    <property type="match status" value="1"/>
</dbReference>
<dbReference type="Gene3D" id="3.40.50.20">
    <property type="match status" value="1"/>
</dbReference>
<dbReference type="Gene3D" id="3.30.1490.20">
    <property type="entry name" value="ATP-grasp fold, A domain"/>
    <property type="match status" value="1"/>
</dbReference>
<dbReference type="Gene3D" id="3.30.470.20">
    <property type="entry name" value="ATP-grasp fold, B domain"/>
    <property type="match status" value="1"/>
</dbReference>
<dbReference type="HAMAP" id="MF_01552">
    <property type="entry name" value="RimK"/>
    <property type="match status" value="1"/>
</dbReference>
<dbReference type="InterPro" id="IPR011761">
    <property type="entry name" value="ATP-grasp"/>
</dbReference>
<dbReference type="InterPro" id="IPR013651">
    <property type="entry name" value="ATP-grasp_RimK-type"/>
</dbReference>
<dbReference type="InterPro" id="IPR013815">
    <property type="entry name" value="ATP_grasp_subdomain_1"/>
</dbReference>
<dbReference type="InterPro" id="IPR023533">
    <property type="entry name" value="RimK"/>
</dbReference>
<dbReference type="InterPro" id="IPR041107">
    <property type="entry name" value="Rimk_N"/>
</dbReference>
<dbReference type="InterPro" id="IPR004666">
    <property type="entry name" value="Rp_bS6_RimK/Lys_biosynth_LsyX"/>
</dbReference>
<dbReference type="NCBIfam" id="NF007764">
    <property type="entry name" value="PRK10446.1"/>
    <property type="match status" value="1"/>
</dbReference>
<dbReference type="NCBIfam" id="TIGR00768">
    <property type="entry name" value="rimK_fam"/>
    <property type="match status" value="1"/>
</dbReference>
<dbReference type="PANTHER" id="PTHR21621:SF7">
    <property type="entry name" value="RIBOSOMAL PROTEIN BS6--L-GLUTAMATE LIGASE"/>
    <property type="match status" value="1"/>
</dbReference>
<dbReference type="PANTHER" id="PTHR21621">
    <property type="entry name" value="RIBOSOMAL PROTEIN S6 MODIFICATION PROTEIN"/>
    <property type="match status" value="1"/>
</dbReference>
<dbReference type="Pfam" id="PF08443">
    <property type="entry name" value="RimK"/>
    <property type="match status" value="1"/>
</dbReference>
<dbReference type="Pfam" id="PF18030">
    <property type="entry name" value="Rimk_N"/>
    <property type="match status" value="1"/>
</dbReference>
<dbReference type="SUPFAM" id="SSF56059">
    <property type="entry name" value="Glutathione synthetase ATP-binding domain-like"/>
    <property type="match status" value="1"/>
</dbReference>
<dbReference type="PROSITE" id="PS50975">
    <property type="entry name" value="ATP_GRASP"/>
    <property type="match status" value="1"/>
</dbReference>
<keyword id="KW-0067">ATP-binding</keyword>
<keyword id="KW-0436">Ligase</keyword>
<keyword id="KW-0460">Magnesium</keyword>
<keyword id="KW-0464">Manganese</keyword>
<keyword id="KW-0479">Metal-binding</keyword>
<keyword id="KW-0547">Nucleotide-binding</keyword>
<keyword id="KW-0648">Protein biosynthesis</keyword>
<gene>
    <name evidence="1" type="primary">rimK</name>
    <name type="ordered locus">Mmwyl1_1361</name>
</gene>
<accession>A6VV11</accession>
<evidence type="ECO:0000255" key="1">
    <source>
        <dbReference type="HAMAP-Rule" id="MF_01552"/>
    </source>
</evidence>
<name>RIMK_MARMS</name>
<reference key="1">
    <citation type="submission" date="2007-06" db="EMBL/GenBank/DDBJ databases">
        <title>Complete sequence of Marinomonas sp. MWYL1.</title>
        <authorList>
            <consortium name="US DOE Joint Genome Institute"/>
            <person name="Copeland A."/>
            <person name="Lucas S."/>
            <person name="Lapidus A."/>
            <person name="Barry K."/>
            <person name="Glavina del Rio T."/>
            <person name="Dalin E."/>
            <person name="Tice H."/>
            <person name="Pitluck S."/>
            <person name="Kiss H."/>
            <person name="Brettin T."/>
            <person name="Bruce D."/>
            <person name="Detter J.C."/>
            <person name="Han C."/>
            <person name="Schmutz J."/>
            <person name="Larimer F."/>
            <person name="Land M."/>
            <person name="Hauser L."/>
            <person name="Kyrpides N."/>
            <person name="Kim E."/>
            <person name="Johnston A.W.B."/>
            <person name="Todd J.D."/>
            <person name="Rogers R."/>
            <person name="Wexler M."/>
            <person name="Bond P.L."/>
            <person name="Li Y."/>
            <person name="Richardson P."/>
        </authorList>
    </citation>
    <scope>NUCLEOTIDE SEQUENCE [LARGE SCALE GENOMIC DNA]</scope>
    <source>
        <strain>MWYL1</strain>
    </source>
</reference>
<comment type="cofactor">
    <cofactor evidence="1">
        <name>Mg(2+)</name>
        <dbReference type="ChEBI" id="CHEBI:18420"/>
    </cofactor>
    <cofactor evidence="1">
        <name>Mn(2+)</name>
        <dbReference type="ChEBI" id="CHEBI:29035"/>
    </cofactor>
    <text evidence="1">Binds 2 magnesium or manganese ions per subunit.</text>
</comment>
<comment type="similarity">
    <text evidence="1">Belongs to the RimK family.</text>
</comment>
<sequence length="301" mass="32426">MKIAILSRNPRLYSTRRLVEAGEQLGHEVDVIDTMHCYMDITSSNPSVRYDGKPLPKYDAVIPRIGASVTFYGTAVVRQFEMMGTYSINESVAISRSRDKLRSLQLMSRKGLGLPKTGFAHHPDKIGDLLKNVGGAPVVIKLLEGTQGIGVVLAESNKTAESIIEAFMGLKANILVQEYIKEAGGADIRCLVVGGKVIAAMKRQGAEGEFRSNLHRGGTASLIRLSPEERRTAVEAAKVMGLNMCGVDILRSNNGPLIMEVNSSPGLEGIESATGKDVASMIIKHIEKTAFLSSTKTKGKG</sequence>
<organism>
    <name type="scientific">Marinomonas sp. (strain MWYL1)</name>
    <dbReference type="NCBI Taxonomy" id="400668"/>
    <lineage>
        <taxon>Bacteria</taxon>
        <taxon>Pseudomonadati</taxon>
        <taxon>Pseudomonadota</taxon>
        <taxon>Gammaproteobacteria</taxon>
        <taxon>Oceanospirillales</taxon>
        <taxon>Oceanospirillaceae</taxon>
        <taxon>Marinomonas</taxon>
    </lineage>
</organism>
<feature type="chain" id="PRO_1000087747" description="Probable alpha-L-glutamate ligase">
    <location>
        <begin position="1"/>
        <end position="301"/>
    </location>
</feature>
<feature type="domain" description="ATP-grasp" evidence="1">
    <location>
        <begin position="104"/>
        <end position="287"/>
    </location>
</feature>
<feature type="binding site" evidence="1">
    <location>
        <position position="141"/>
    </location>
    <ligand>
        <name>ATP</name>
        <dbReference type="ChEBI" id="CHEBI:30616"/>
    </ligand>
</feature>
<feature type="binding site" evidence="1">
    <location>
        <begin position="178"/>
        <end position="179"/>
    </location>
    <ligand>
        <name>ATP</name>
        <dbReference type="ChEBI" id="CHEBI:30616"/>
    </ligand>
</feature>
<feature type="binding site" evidence="1">
    <location>
        <position position="187"/>
    </location>
    <ligand>
        <name>ATP</name>
        <dbReference type="ChEBI" id="CHEBI:30616"/>
    </ligand>
</feature>
<feature type="binding site" evidence="1">
    <location>
        <begin position="211"/>
        <end position="213"/>
    </location>
    <ligand>
        <name>ATP</name>
        <dbReference type="ChEBI" id="CHEBI:30616"/>
    </ligand>
</feature>
<feature type="binding site" evidence="1">
    <location>
        <position position="248"/>
    </location>
    <ligand>
        <name>Mg(2+)</name>
        <dbReference type="ChEBI" id="CHEBI:18420"/>
        <label>1</label>
    </ligand>
</feature>
<feature type="binding site" evidence="1">
    <location>
        <position position="248"/>
    </location>
    <ligand>
        <name>Mn(2+)</name>
        <dbReference type="ChEBI" id="CHEBI:29035"/>
        <label>1</label>
    </ligand>
</feature>
<feature type="binding site" evidence="1">
    <location>
        <position position="260"/>
    </location>
    <ligand>
        <name>Mg(2+)</name>
        <dbReference type="ChEBI" id="CHEBI:18420"/>
        <label>1</label>
    </ligand>
</feature>
<feature type="binding site" evidence="1">
    <location>
        <position position="260"/>
    </location>
    <ligand>
        <name>Mg(2+)</name>
        <dbReference type="ChEBI" id="CHEBI:18420"/>
        <label>2</label>
    </ligand>
</feature>
<feature type="binding site" evidence="1">
    <location>
        <position position="260"/>
    </location>
    <ligand>
        <name>Mn(2+)</name>
        <dbReference type="ChEBI" id="CHEBI:29035"/>
        <label>1</label>
    </ligand>
</feature>
<feature type="binding site" evidence="1">
    <location>
        <position position="260"/>
    </location>
    <ligand>
        <name>Mn(2+)</name>
        <dbReference type="ChEBI" id="CHEBI:29035"/>
        <label>2</label>
    </ligand>
</feature>
<feature type="binding site" evidence="1">
    <location>
        <position position="262"/>
    </location>
    <ligand>
        <name>Mg(2+)</name>
        <dbReference type="ChEBI" id="CHEBI:18420"/>
        <label>2</label>
    </ligand>
</feature>
<feature type="binding site" evidence="1">
    <location>
        <position position="262"/>
    </location>
    <ligand>
        <name>Mn(2+)</name>
        <dbReference type="ChEBI" id="CHEBI:29035"/>
        <label>2</label>
    </ligand>
</feature>